<keyword id="KW-1015">Disulfide bond</keyword>
<keyword id="KW-0249">Electron transport</keyword>
<keyword id="KW-0408">Iron</keyword>
<keyword id="KW-0472">Membrane</keyword>
<keyword id="KW-0479">Metal-binding</keyword>
<keyword id="KW-0496">Mitochondrion</keyword>
<keyword id="KW-0999">Mitochondrion inner membrane</keyword>
<keyword id="KW-0560">Oxidoreductase</keyword>
<keyword id="KW-0679">Respiratory chain</keyword>
<keyword id="KW-0809">Transit peptide</keyword>
<keyword id="KW-0812">Transmembrane</keyword>
<keyword id="KW-1133">Transmembrane helix</keyword>
<keyword id="KW-0813">Transport</keyword>
<dbReference type="EC" id="1.10.3.11"/>
<dbReference type="EMBL" id="X79329">
    <property type="protein sequence ID" value="CAA55892.1"/>
    <property type="status" value="ALT_INIT"/>
    <property type="molecule type" value="mRNA"/>
</dbReference>
<dbReference type="PIR" id="S45035">
    <property type="entry name" value="S45035"/>
</dbReference>
<dbReference type="SMR" id="Q40294"/>
<dbReference type="GO" id="GO:0005743">
    <property type="term" value="C:mitochondrial inner membrane"/>
    <property type="evidence" value="ECO:0007669"/>
    <property type="project" value="UniProtKB-SubCell"/>
</dbReference>
<dbReference type="GO" id="GO:0009916">
    <property type="term" value="F:alternative oxidase activity"/>
    <property type="evidence" value="ECO:0007669"/>
    <property type="project" value="InterPro"/>
</dbReference>
<dbReference type="GO" id="GO:0046872">
    <property type="term" value="F:metal ion binding"/>
    <property type="evidence" value="ECO:0007669"/>
    <property type="project" value="UniProtKB-KW"/>
</dbReference>
<dbReference type="GO" id="GO:0106292">
    <property type="term" value="F:superoxide-generating NADPH oxidase activity"/>
    <property type="evidence" value="ECO:0007669"/>
    <property type="project" value="UniProtKB-ARBA"/>
</dbReference>
<dbReference type="GO" id="GO:0102721">
    <property type="term" value="F:ubiquinol:oxygen oxidoreductase activity"/>
    <property type="evidence" value="ECO:0007669"/>
    <property type="project" value="UniProtKB-EC"/>
</dbReference>
<dbReference type="GO" id="GO:0010230">
    <property type="term" value="P:alternative respiration"/>
    <property type="evidence" value="ECO:0007669"/>
    <property type="project" value="TreeGrafter"/>
</dbReference>
<dbReference type="CDD" id="cd01053">
    <property type="entry name" value="AOX"/>
    <property type="match status" value="1"/>
</dbReference>
<dbReference type="FunFam" id="1.20.1260.140:FF:000001">
    <property type="entry name" value="Ubiquinol oxidase"/>
    <property type="match status" value="1"/>
</dbReference>
<dbReference type="Gene3D" id="1.20.1260.140">
    <property type="entry name" value="Alternative oxidase"/>
    <property type="match status" value="1"/>
</dbReference>
<dbReference type="InterPro" id="IPR002680">
    <property type="entry name" value="AOX"/>
</dbReference>
<dbReference type="InterPro" id="IPR038659">
    <property type="entry name" value="AOX_sf"/>
</dbReference>
<dbReference type="PANTHER" id="PTHR31803">
    <property type="entry name" value="ALTERNATIVE OXIDASE"/>
    <property type="match status" value="1"/>
</dbReference>
<dbReference type="PANTHER" id="PTHR31803:SF6">
    <property type="entry name" value="UBIQUINOL OXIDASE 2, MITOCHONDRIAL"/>
    <property type="match status" value="1"/>
</dbReference>
<dbReference type="Pfam" id="PF01786">
    <property type="entry name" value="AOX"/>
    <property type="match status" value="1"/>
</dbReference>
<dbReference type="PIRSF" id="PIRSF005229">
    <property type="entry name" value="AOX"/>
    <property type="match status" value="1"/>
</dbReference>
<feature type="transit peptide" description="Mitochondrion" evidence="5">
    <location>
        <begin position="1"/>
        <end position="46"/>
    </location>
</feature>
<feature type="chain" id="PRO_0000001735" description="Ubiquinol oxidase, mitochondrial">
    <location>
        <begin position="47"/>
        <end position="318"/>
    </location>
</feature>
<feature type="transmembrane region" description="Helical" evidence="5">
    <location>
        <begin position="143"/>
        <end position="163"/>
    </location>
</feature>
<feature type="transmembrane region" description="Helical" evidence="5">
    <location>
        <begin position="205"/>
        <end position="225"/>
    </location>
</feature>
<feature type="binding site" evidence="2">
    <location>
        <position position="147"/>
    </location>
    <ligand>
        <name>Fe cation</name>
        <dbReference type="ChEBI" id="CHEBI:24875"/>
        <label>1</label>
    </ligand>
</feature>
<feature type="binding site" evidence="2">
    <location>
        <position position="186"/>
    </location>
    <ligand>
        <name>Fe cation</name>
        <dbReference type="ChEBI" id="CHEBI:24875"/>
        <label>1</label>
    </ligand>
</feature>
<feature type="binding site" evidence="2">
    <location>
        <position position="186"/>
    </location>
    <ligand>
        <name>Fe cation</name>
        <dbReference type="ChEBI" id="CHEBI:24875"/>
        <label>2</label>
    </ligand>
</feature>
<feature type="binding site" evidence="2">
    <location>
        <position position="189"/>
    </location>
    <ligand>
        <name>Fe cation</name>
        <dbReference type="ChEBI" id="CHEBI:24875"/>
        <label>1</label>
    </ligand>
</feature>
<feature type="binding site" evidence="2">
    <location>
        <position position="237"/>
    </location>
    <ligand>
        <name>Fe cation</name>
        <dbReference type="ChEBI" id="CHEBI:24875"/>
        <label>2</label>
    </ligand>
</feature>
<feature type="binding site" evidence="2">
    <location>
        <position position="288"/>
    </location>
    <ligand>
        <name>Fe cation</name>
        <dbReference type="ChEBI" id="CHEBI:24875"/>
        <label>1</label>
    </ligand>
</feature>
<feature type="binding site" evidence="2">
    <location>
        <position position="288"/>
    </location>
    <ligand>
        <name>Fe cation</name>
        <dbReference type="ChEBI" id="CHEBI:24875"/>
        <label>2</label>
    </ligand>
</feature>
<feature type="binding site" evidence="2">
    <location>
        <position position="291"/>
    </location>
    <ligand>
        <name>Fe cation</name>
        <dbReference type="ChEBI" id="CHEBI:24875"/>
        <label>2</label>
    </ligand>
</feature>
<feature type="disulfide bond" description="Interchain" evidence="4">
    <location>
        <position position="91"/>
    </location>
</feature>
<sequence>MTVMRGLLNGGRYGNRYIWTAISLRHPEVMEGNGLESAVMQWRRMLSNAGGAEAQVKEQKEEKKDAMVSNYWGISRPKITREDGSEWPWNCFMPWETYRSDLSIDLKKHHVPRTFMDKFAYRTVKILRVPTDIFFQRRYGCRAMMLETVAAVPGMVGGMLLHLKSLRKLEQSGGWIKALLEEAENERMHLMTMVELVQPKWYERLLVLAVQGVFFNSFFVLYVLSPKLAHRIVGYLEEEAIHSYTEYLKDIDSGAIKNIPAPAIAIDYWRLPKDATLKDVITVVRADEAHHRDVNHFASDVQVQGKELRDAPAPVGYH</sequence>
<gene>
    <name type="primary">AOMI 1</name>
</gene>
<protein>
    <recommendedName>
        <fullName>Ubiquinol oxidase, mitochondrial</fullName>
        <ecNumber>1.10.3.11</ecNumber>
    </recommendedName>
    <alternativeName>
        <fullName>Alternative oxidase</fullName>
    </alternativeName>
</protein>
<organism>
    <name type="scientific">Mangifera indica</name>
    <name type="common">Mango</name>
    <dbReference type="NCBI Taxonomy" id="29780"/>
    <lineage>
        <taxon>Eukaryota</taxon>
        <taxon>Viridiplantae</taxon>
        <taxon>Streptophyta</taxon>
        <taxon>Embryophyta</taxon>
        <taxon>Tracheophyta</taxon>
        <taxon>Spermatophyta</taxon>
        <taxon>Magnoliopsida</taxon>
        <taxon>eudicotyledons</taxon>
        <taxon>Gunneridae</taxon>
        <taxon>Pentapetalae</taxon>
        <taxon>rosids</taxon>
        <taxon>malvids</taxon>
        <taxon>Sapindales</taxon>
        <taxon>Anacardiaceae</taxon>
        <taxon>Mangifera</taxon>
    </lineage>
</organism>
<name>AOX1_MANIN</name>
<evidence type="ECO:0000250" key="1"/>
<evidence type="ECO:0000250" key="2">
    <source>
        <dbReference type="UniProtKB" id="Q26710"/>
    </source>
</evidence>
<evidence type="ECO:0000250" key="3">
    <source>
        <dbReference type="UniProtKB" id="Q39219"/>
    </source>
</evidence>
<evidence type="ECO:0000250" key="4">
    <source>
        <dbReference type="UniProtKB" id="Q41224"/>
    </source>
</evidence>
<evidence type="ECO:0000255" key="5"/>
<evidence type="ECO:0000305" key="6"/>
<comment type="function">
    <text evidence="1">Catalyzes the cyanide-resistant oxidation of ubiquinol and the reduction of molecular oxygen to water, but does not translocate protons and consequently is not linked to oxidative phosphorylation. May increase respiration when the cytochrome respiratory pathway is restricted, or in response to low temperatures (By similarity).</text>
</comment>
<comment type="catalytic activity">
    <reaction>
        <text>2 a ubiquinol + O2 = 2 a ubiquinone + 2 H2O</text>
        <dbReference type="Rhea" id="RHEA:30255"/>
        <dbReference type="Rhea" id="RHEA-COMP:9565"/>
        <dbReference type="Rhea" id="RHEA-COMP:9566"/>
        <dbReference type="ChEBI" id="CHEBI:15377"/>
        <dbReference type="ChEBI" id="CHEBI:15379"/>
        <dbReference type="ChEBI" id="CHEBI:16389"/>
        <dbReference type="ChEBI" id="CHEBI:17976"/>
        <dbReference type="EC" id="1.10.3.11"/>
    </reaction>
</comment>
<comment type="cofactor">
    <cofactor evidence="3">
        <name>Fe cation</name>
        <dbReference type="ChEBI" id="CHEBI:24875"/>
    </cofactor>
    <text evidence="3">Binds 2 iron ions per subunit.</text>
</comment>
<comment type="subunit">
    <text evidence="6">Homodimer; disulfide-linked.</text>
</comment>
<comment type="subcellular location">
    <subcellularLocation>
        <location evidence="6">Mitochondrion inner membrane</location>
        <topology evidence="6">Multi-pass membrane protein</topology>
    </subcellularLocation>
    <text>Mitochondrial, possibly in the inner surface of the inner mitochondrial membrane.</text>
</comment>
<comment type="induction">
    <text>Increases during ripening.</text>
</comment>
<comment type="similarity">
    <text evidence="6">Belongs to the alternative oxidase family.</text>
</comment>
<comment type="sequence caution" evidence="6">
    <conflict type="erroneous initiation">
        <sequence resource="EMBL-CDS" id="CAA55892"/>
    </conflict>
    <text>Truncated N-terminus.</text>
</comment>
<proteinExistence type="evidence at protein level"/>
<reference key="1">
    <citation type="journal article" date="1995" name="Planta">
        <title>Alternative oxidase from mango (Mangifera indica, L.) is differentially regulated during fruit ripening.</title>
        <authorList>
            <person name="Cruz-Hernandez A."/>
            <person name="Gomez-Lim M.A."/>
        </authorList>
    </citation>
    <scope>NUCLEOTIDE SEQUENCE [MRNA]</scope>
    <source>
        <strain>cv. Manila</strain>
    </source>
</reference>
<reference key="2">
    <citation type="journal article" date="1999" name="FEBS Lett.">
        <title>A revised model of the active site of alternative oxidase.</title>
        <authorList>
            <person name="Andersson M.E."/>
            <person name="Nordlund P."/>
        </authorList>
    </citation>
    <scope>IRON-BINDING SITES</scope>
</reference>
<accession>Q40294</accession>